<comment type="function">
    <text evidence="1">Responsible for synthesis of pseudouridine from uracil-55 in the psi GC loop of transfer RNAs.</text>
</comment>
<comment type="catalytic activity">
    <reaction evidence="1">
        <text>uridine(55) in tRNA = pseudouridine(55) in tRNA</text>
        <dbReference type="Rhea" id="RHEA:42532"/>
        <dbReference type="Rhea" id="RHEA-COMP:10101"/>
        <dbReference type="Rhea" id="RHEA-COMP:10102"/>
        <dbReference type="ChEBI" id="CHEBI:65314"/>
        <dbReference type="ChEBI" id="CHEBI:65315"/>
        <dbReference type="EC" id="5.4.99.25"/>
    </reaction>
</comment>
<comment type="interaction">
    <interactant intactId="EBI-6473797">
        <id>Q97QJ3</id>
    </interactant>
    <interactant intactId="EBI-6473801">
        <id>A0A0H2URH9</id>
        <label>SP_1748</label>
    </interactant>
    <organismsDiffer>false</organismsDiffer>
    <experiments>4</experiments>
</comment>
<comment type="similarity">
    <text evidence="1">Belongs to the pseudouridine synthase TruB family. Type 1 subfamily.</text>
</comment>
<organism>
    <name type="scientific">Streptococcus pneumoniae serotype 4 (strain ATCC BAA-334 / TIGR4)</name>
    <dbReference type="NCBI Taxonomy" id="170187"/>
    <lineage>
        <taxon>Bacteria</taxon>
        <taxon>Bacillati</taxon>
        <taxon>Bacillota</taxon>
        <taxon>Bacilli</taxon>
        <taxon>Lactobacillales</taxon>
        <taxon>Streptococcaceae</taxon>
        <taxon>Streptococcus</taxon>
    </lineage>
</organism>
<name>TRUB_STRPN</name>
<keyword id="KW-0413">Isomerase</keyword>
<keyword id="KW-1185">Reference proteome</keyword>
<keyword id="KW-0819">tRNA processing</keyword>
<sequence length="292" mass="32271">MNGIINLKKEAGMTSHDAVFKLRKILGTKKIGHGGTLDPDVVGVLPIAVGKATRMVEFMQDEGKIYEGEITLGYSTKTEDASGEVVAETPVLSLLDEKLVDEAIASLTGPITQIPPMYSAVKVNGRKLYEYARAGQEVERPERQVTIYQFERTSPISYDGQLARFTFRVKCSKGTYIRTLSVDLGEKLGYAAHMSHLTRTSAAGLQLEDALALEEIAEKVEAGQLDFLHPLEIGTGDLVKVFLSPEEATEVRFGRFIELDQTDKELAAFEDDKLLAILEKRGNLYKPRKVFS</sequence>
<proteinExistence type="evidence at protein level"/>
<accession>Q97QJ3</accession>
<dbReference type="EC" id="5.4.99.25" evidence="1"/>
<dbReference type="EMBL" id="AE005672">
    <property type="protein sequence ID" value="AAK75319.1"/>
    <property type="molecule type" value="Genomic_DNA"/>
</dbReference>
<dbReference type="PIR" id="F95140">
    <property type="entry name" value="F95140"/>
</dbReference>
<dbReference type="RefSeq" id="WP_001013240.1">
    <property type="nucleotide sequence ID" value="NZ_CP155539.1"/>
</dbReference>
<dbReference type="SMR" id="Q97QJ3"/>
<dbReference type="IntAct" id="Q97QJ3">
    <property type="interactions" value="1"/>
</dbReference>
<dbReference type="PaxDb" id="170187-SP_1212"/>
<dbReference type="EnsemblBacteria" id="AAK75319">
    <property type="protein sequence ID" value="AAK75319"/>
    <property type="gene ID" value="SP_1212"/>
</dbReference>
<dbReference type="KEGG" id="spn:SP_1212"/>
<dbReference type="eggNOG" id="COG0130">
    <property type="taxonomic scope" value="Bacteria"/>
</dbReference>
<dbReference type="PhylomeDB" id="Q97QJ3"/>
<dbReference type="BioCyc" id="SPNE170187:G1FZB-1227-MONOMER"/>
<dbReference type="BRENDA" id="5.4.99.25">
    <property type="organism ID" value="1960"/>
</dbReference>
<dbReference type="Proteomes" id="UP000000585">
    <property type="component" value="Chromosome"/>
</dbReference>
<dbReference type="GO" id="GO:0003723">
    <property type="term" value="F:RNA binding"/>
    <property type="evidence" value="ECO:0007669"/>
    <property type="project" value="InterPro"/>
</dbReference>
<dbReference type="GO" id="GO:0160148">
    <property type="term" value="F:tRNA pseudouridine(55) synthase activity"/>
    <property type="evidence" value="ECO:0007669"/>
    <property type="project" value="UniProtKB-EC"/>
</dbReference>
<dbReference type="GO" id="GO:1990481">
    <property type="term" value="P:mRNA pseudouridine synthesis"/>
    <property type="evidence" value="ECO:0007669"/>
    <property type="project" value="TreeGrafter"/>
</dbReference>
<dbReference type="GO" id="GO:0031119">
    <property type="term" value="P:tRNA pseudouridine synthesis"/>
    <property type="evidence" value="ECO:0007669"/>
    <property type="project" value="UniProtKB-UniRule"/>
</dbReference>
<dbReference type="CDD" id="cd02573">
    <property type="entry name" value="PseudoU_synth_EcTruB"/>
    <property type="match status" value="1"/>
</dbReference>
<dbReference type="FunFam" id="3.30.2350.10:FF:000011">
    <property type="entry name" value="tRNA pseudouridine synthase B"/>
    <property type="match status" value="1"/>
</dbReference>
<dbReference type="Gene3D" id="3.30.2350.10">
    <property type="entry name" value="Pseudouridine synthase"/>
    <property type="match status" value="1"/>
</dbReference>
<dbReference type="HAMAP" id="MF_01080">
    <property type="entry name" value="TruB_bact"/>
    <property type="match status" value="1"/>
</dbReference>
<dbReference type="InterPro" id="IPR020103">
    <property type="entry name" value="PsdUridine_synth_cat_dom_sf"/>
</dbReference>
<dbReference type="InterPro" id="IPR002501">
    <property type="entry name" value="PsdUridine_synth_N"/>
</dbReference>
<dbReference type="InterPro" id="IPR014780">
    <property type="entry name" value="tRNA_psdUridine_synth_TruB"/>
</dbReference>
<dbReference type="InterPro" id="IPR032819">
    <property type="entry name" value="TruB_C"/>
</dbReference>
<dbReference type="NCBIfam" id="TIGR00431">
    <property type="entry name" value="TruB"/>
    <property type="match status" value="1"/>
</dbReference>
<dbReference type="PANTHER" id="PTHR13767:SF2">
    <property type="entry name" value="PSEUDOURIDYLATE SYNTHASE TRUB1"/>
    <property type="match status" value="1"/>
</dbReference>
<dbReference type="PANTHER" id="PTHR13767">
    <property type="entry name" value="TRNA-PSEUDOURIDINE SYNTHASE"/>
    <property type="match status" value="1"/>
</dbReference>
<dbReference type="Pfam" id="PF16198">
    <property type="entry name" value="TruB_C_2"/>
    <property type="match status" value="1"/>
</dbReference>
<dbReference type="Pfam" id="PF01509">
    <property type="entry name" value="TruB_N"/>
    <property type="match status" value="1"/>
</dbReference>
<dbReference type="SUPFAM" id="SSF55120">
    <property type="entry name" value="Pseudouridine synthase"/>
    <property type="match status" value="1"/>
</dbReference>
<feature type="chain" id="PRO_0000121915" description="tRNA pseudouridine synthase B">
    <location>
        <begin position="1"/>
        <end position="292"/>
    </location>
</feature>
<feature type="active site" description="Nucleophile" evidence="1">
    <location>
        <position position="38"/>
    </location>
</feature>
<gene>
    <name evidence="1" type="primary">truB</name>
    <name type="ordered locus">SP_1212</name>
</gene>
<reference key="1">
    <citation type="journal article" date="2001" name="Science">
        <title>Complete genome sequence of a virulent isolate of Streptococcus pneumoniae.</title>
        <authorList>
            <person name="Tettelin H."/>
            <person name="Nelson K.E."/>
            <person name="Paulsen I.T."/>
            <person name="Eisen J.A."/>
            <person name="Read T.D."/>
            <person name="Peterson S.N."/>
            <person name="Heidelberg J.F."/>
            <person name="DeBoy R.T."/>
            <person name="Haft D.H."/>
            <person name="Dodson R.J."/>
            <person name="Durkin A.S."/>
            <person name="Gwinn M.L."/>
            <person name="Kolonay J.F."/>
            <person name="Nelson W.C."/>
            <person name="Peterson J.D."/>
            <person name="Umayam L.A."/>
            <person name="White O."/>
            <person name="Salzberg S.L."/>
            <person name="Lewis M.R."/>
            <person name="Radune D."/>
            <person name="Holtzapple E.K."/>
            <person name="Khouri H.M."/>
            <person name="Wolf A.M."/>
            <person name="Utterback T.R."/>
            <person name="Hansen C.L."/>
            <person name="McDonald L.A."/>
            <person name="Feldblyum T.V."/>
            <person name="Angiuoli S.V."/>
            <person name="Dickinson T."/>
            <person name="Hickey E.K."/>
            <person name="Holt I.E."/>
            <person name="Loftus B.J."/>
            <person name="Yang F."/>
            <person name="Smith H.O."/>
            <person name="Venter J.C."/>
            <person name="Dougherty B.A."/>
            <person name="Morrison D.A."/>
            <person name="Hollingshead S.K."/>
            <person name="Fraser C.M."/>
        </authorList>
    </citation>
    <scope>NUCLEOTIDE SEQUENCE [LARGE SCALE GENOMIC DNA]</scope>
    <source>
        <strain>ATCC BAA-334 / TIGR4</strain>
    </source>
</reference>
<evidence type="ECO:0000255" key="1">
    <source>
        <dbReference type="HAMAP-Rule" id="MF_01080"/>
    </source>
</evidence>
<protein>
    <recommendedName>
        <fullName evidence="1">tRNA pseudouridine synthase B</fullName>
        <ecNumber evidence="1">5.4.99.25</ecNumber>
    </recommendedName>
    <alternativeName>
        <fullName evidence="1">tRNA pseudouridine(55) synthase</fullName>
        <shortName evidence="1">Psi55 synthase</shortName>
    </alternativeName>
    <alternativeName>
        <fullName evidence="1">tRNA pseudouridylate synthase</fullName>
    </alternativeName>
    <alternativeName>
        <fullName evidence="1">tRNA-uridine isomerase</fullName>
    </alternativeName>
</protein>